<accession>C4KIK6</accession>
<keyword id="KW-0067">ATP-binding</keyword>
<keyword id="KW-0963">Cytoplasm</keyword>
<keyword id="KW-0547">Nucleotide-binding</keyword>
<keyword id="KW-0694">RNA-binding</keyword>
<keyword id="KW-0784">Thiamine biosynthesis</keyword>
<keyword id="KW-0808">Transferase</keyword>
<keyword id="KW-0820">tRNA-binding</keyword>
<name>THII_SACI6</name>
<gene>
    <name evidence="1" type="primary">thiI</name>
    <name type="ordered locus">M164_1817</name>
</gene>
<sequence length="373" mass="42251">MLIIIRPSGEIALKSPRSRRNFEHTLANNIRSVIKEGKIWRSQGVLFLEVNDDNKNIEELSKVFGIASFSPVMSIKSYNNNLEDIINKAKEVFAEIVKGKIFSVRAKRIGSHNFTSLDVQRKVGEALYPFSRGVNLENPEVEVFIEIRNDVAYFYHKIIKGPKGLPVGVAGKTVVLFSGGIDSPVATWMMMKRGSIPVILNFNLGGSIHRKFVLEELSVLRKWSGGHKLKLFIVNGTDVLIKLSQIEKRNRVVMLKRVMYKVAERLCDKANAKSITTGESLSQVSSQTMTNLYVTEYGIKYPIFRPLIGFDKEEIVELARKIGTYQYSIKLPEYCAISTKARTSVELDEVLKDEENLNIDYEKVLENSEVIEI</sequence>
<feature type="chain" id="PRO_1000201921" description="Probable tRNA sulfurtransferase">
    <location>
        <begin position="1"/>
        <end position="373"/>
    </location>
</feature>
<feature type="domain" description="THUMP" evidence="1">
    <location>
        <begin position="54"/>
        <end position="158"/>
    </location>
</feature>
<feature type="binding site" evidence="1">
    <location>
        <begin position="176"/>
        <end position="177"/>
    </location>
    <ligand>
        <name>ATP</name>
        <dbReference type="ChEBI" id="CHEBI:30616"/>
    </ligand>
</feature>
<feature type="binding site" evidence="1">
    <location>
        <begin position="201"/>
        <end position="202"/>
    </location>
    <ligand>
        <name>ATP</name>
        <dbReference type="ChEBI" id="CHEBI:30616"/>
    </ligand>
</feature>
<feature type="binding site" evidence="1">
    <location>
        <position position="256"/>
    </location>
    <ligand>
        <name>ATP</name>
        <dbReference type="ChEBI" id="CHEBI:30616"/>
    </ligand>
</feature>
<feature type="binding site" evidence="1">
    <location>
        <position position="278"/>
    </location>
    <ligand>
        <name>ATP</name>
        <dbReference type="ChEBI" id="CHEBI:30616"/>
    </ligand>
</feature>
<feature type="binding site" evidence="1">
    <location>
        <position position="287"/>
    </location>
    <ligand>
        <name>ATP</name>
        <dbReference type="ChEBI" id="CHEBI:30616"/>
    </ligand>
</feature>
<organism>
    <name type="scientific">Saccharolobus islandicus (strain M.16.4 / Kamchatka #3)</name>
    <name type="common">Sulfolobus islandicus</name>
    <dbReference type="NCBI Taxonomy" id="426118"/>
    <lineage>
        <taxon>Archaea</taxon>
        <taxon>Thermoproteota</taxon>
        <taxon>Thermoprotei</taxon>
        <taxon>Sulfolobales</taxon>
        <taxon>Sulfolobaceae</taxon>
        <taxon>Saccharolobus</taxon>
    </lineage>
</organism>
<reference key="1">
    <citation type="journal article" date="2009" name="Proc. Natl. Acad. Sci. U.S.A.">
        <title>Biogeography of the Sulfolobus islandicus pan-genome.</title>
        <authorList>
            <person name="Reno M.L."/>
            <person name="Held N.L."/>
            <person name="Fields C.J."/>
            <person name="Burke P.V."/>
            <person name="Whitaker R.J."/>
        </authorList>
    </citation>
    <scope>NUCLEOTIDE SEQUENCE [LARGE SCALE GENOMIC DNA]</scope>
    <source>
        <strain>M.16.4 / Kamchatka #3</strain>
    </source>
</reference>
<comment type="function">
    <text evidence="1">Catalyzes the ATP-dependent transfer of a sulfur to tRNA to produce 4-thiouridine in position 8 of tRNAs, which functions as a near-UV photosensor. Also catalyzes the transfer of sulfur to the sulfur carrier protein ThiS, forming ThiS-thiocarboxylate. This is a step in the synthesis of thiazole, in the thiamine biosynthesis pathway. The sulfur is donated as persulfide by IscS.</text>
</comment>
<comment type="catalytic activity">
    <reaction evidence="1">
        <text>[ThiI sulfur-carrier protein]-S-sulfanyl-L-cysteine + a uridine in tRNA + 2 reduced [2Fe-2S]-[ferredoxin] + ATP + H(+) = [ThiI sulfur-carrier protein]-L-cysteine + a 4-thiouridine in tRNA + 2 oxidized [2Fe-2S]-[ferredoxin] + AMP + diphosphate</text>
        <dbReference type="Rhea" id="RHEA:24176"/>
        <dbReference type="Rhea" id="RHEA-COMP:10000"/>
        <dbReference type="Rhea" id="RHEA-COMP:10001"/>
        <dbReference type="Rhea" id="RHEA-COMP:13337"/>
        <dbReference type="Rhea" id="RHEA-COMP:13338"/>
        <dbReference type="Rhea" id="RHEA-COMP:13339"/>
        <dbReference type="Rhea" id="RHEA-COMP:13340"/>
        <dbReference type="ChEBI" id="CHEBI:15378"/>
        <dbReference type="ChEBI" id="CHEBI:29950"/>
        <dbReference type="ChEBI" id="CHEBI:30616"/>
        <dbReference type="ChEBI" id="CHEBI:33019"/>
        <dbReference type="ChEBI" id="CHEBI:33737"/>
        <dbReference type="ChEBI" id="CHEBI:33738"/>
        <dbReference type="ChEBI" id="CHEBI:61963"/>
        <dbReference type="ChEBI" id="CHEBI:65315"/>
        <dbReference type="ChEBI" id="CHEBI:136798"/>
        <dbReference type="ChEBI" id="CHEBI:456215"/>
        <dbReference type="EC" id="2.8.1.4"/>
    </reaction>
</comment>
<comment type="catalytic activity">
    <reaction evidence="1">
        <text>[ThiS sulfur-carrier protein]-C-terminal Gly-Gly-AMP + S-sulfanyl-L-cysteinyl-[cysteine desulfurase] + AH2 = [ThiS sulfur-carrier protein]-C-terminal-Gly-aminoethanethioate + L-cysteinyl-[cysteine desulfurase] + A + AMP + 2 H(+)</text>
        <dbReference type="Rhea" id="RHEA:43340"/>
        <dbReference type="Rhea" id="RHEA-COMP:12157"/>
        <dbReference type="Rhea" id="RHEA-COMP:12158"/>
        <dbReference type="Rhea" id="RHEA-COMP:12910"/>
        <dbReference type="Rhea" id="RHEA-COMP:19908"/>
        <dbReference type="ChEBI" id="CHEBI:13193"/>
        <dbReference type="ChEBI" id="CHEBI:15378"/>
        <dbReference type="ChEBI" id="CHEBI:17499"/>
        <dbReference type="ChEBI" id="CHEBI:29950"/>
        <dbReference type="ChEBI" id="CHEBI:61963"/>
        <dbReference type="ChEBI" id="CHEBI:90618"/>
        <dbReference type="ChEBI" id="CHEBI:232372"/>
        <dbReference type="ChEBI" id="CHEBI:456215"/>
    </reaction>
</comment>
<comment type="pathway">
    <text evidence="1">Cofactor biosynthesis; thiamine diphosphate biosynthesis.</text>
</comment>
<comment type="subcellular location">
    <subcellularLocation>
        <location evidence="1">Cytoplasm</location>
    </subcellularLocation>
</comment>
<comment type="similarity">
    <text evidence="1">Belongs to the ThiI family.</text>
</comment>
<evidence type="ECO:0000255" key="1">
    <source>
        <dbReference type="HAMAP-Rule" id="MF_00021"/>
    </source>
</evidence>
<protein>
    <recommendedName>
        <fullName evidence="1">Probable tRNA sulfurtransferase</fullName>
        <ecNumber evidence="1">2.8.1.4</ecNumber>
    </recommendedName>
    <alternativeName>
        <fullName evidence="1">Sulfur carrier protein ThiS sulfurtransferase</fullName>
    </alternativeName>
    <alternativeName>
        <fullName evidence="1">Thiamine biosynthesis protein ThiI</fullName>
    </alternativeName>
    <alternativeName>
        <fullName evidence="1">tRNA 4-thiouridine synthase</fullName>
    </alternativeName>
</protein>
<dbReference type="EC" id="2.8.1.4" evidence="1"/>
<dbReference type="EMBL" id="CP001402">
    <property type="protein sequence ID" value="ACR42420.1"/>
    <property type="molecule type" value="Genomic_DNA"/>
</dbReference>
<dbReference type="RefSeq" id="WP_012736063.1">
    <property type="nucleotide sequence ID" value="NC_012726.1"/>
</dbReference>
<dbReference type="SMR" id="C4KIK6"/>
<dbReference type="GeneID" id="84062121"/>
<dbReference type="KEGG" id="sid:M164_1817"/>
<dbReference type="HOGENOM" id="CLU_037952_4_0_2"/>
<dbReference type="UniPathway" id="UPA00060"/>
<dbReference type="Proteomes" id="UP000001479">
    <property type="component" value="Chromosome"/>
</dbReference>
<dbReference type="GO" id="GO:0005829">
    <property type="term" value="C:cytosol"/>
    <property type="evidence" value="ECO:0007669"/>
    <property type="project" value="TreeGrafter"/>
</dbReference>
<dbReference type="GO" id="GO:0005524">
    <property type="term" value="F:ATP binding"/>
    <property type="evidence" value="ECO:0007669"/>
    <property type="project" value="UniProtKB-UniRule"/>
</dbReference>
<dbReference type="GO" id="GO:0004810">
    <property type="term" value="F:CCA tRNA nucleotidyltransferase activity"/>
    <property type="evidence" value="ECO:0007669"/>
    <property type="project" value="InterPro"/>
</dbReference>
<dbReference type="GO" id="GO:0000049">
    <property type="term" value="F:tRNA binding"/>
    <property type="evidence" value="ECO:0007669"/>
    <property type="project" value="UniProtKB-UniRule"/>
</dbReference>
<dbReference type="GO" id="GO:0140741">
    <property type="term" value="F:tRNA-uracil-4 sulfurtransferase activity"/>
    <property type="evidence" value="ECO:0007669"/>
    <property type="project" value="UniProtKB-EC"/>
</dbReference>
<dbReference type="GO" id="GO:0009228">
    <property type="term" value="P:thiamine biosynthetic process"/>
    <property type="evidence" value="ECO:0007669"/>
    <property type="project" value="UniProtKB-KW"/>
</dbReference>
<dbReference type="GO" id="GO:0009229">
    <property type="term" value="P:thiamine diphosphate biosynthetic process"/>
    <property type="evidence" value="ECO:0007669"/>
    <property type="project" value="UniProtKB-UniRule"/>
</dbReference>
<dbReference type="GO" id="GO:0052837">
    <property type="term" value="P:thiazole biosynthetic process"/>
    <property type="evidence" value="ECO:0007669"/>
    <property type="project" value="TreeGrafter"/>
</dbReference>
<dbReference type="GO" id="GO:0002937">
    <property type="term" value="P:tRNA 4-thiouridine biosynthesis"/>
    <property type="evidence" value="ECO:0007669"/>
    <property type="project" value="TreeGrafter"/>
</dbReference>
<dbReference type="CDD" id="cd01712">
    <property type="entry name" value="PPase_ThiI"/>
    <property type="match status" value="1"/>
</dbReference>
<dbReference type="CDD" id="cd11716">
    <property type="entry name" value="THUMP_ThiI"/>
    <property type="match status" value="1"/>
</dbReference>
<dbReference type="Gene3D" id="3.30.2130.30">
    <property type="match status" value="1"/>
</dbReference>
<dbReference type="Gene3D" id="3.40.50.620">
    <property type="entry name" value="HUPs"/>
    <property type="match status" value="1"/>
</dbReference>
<dbReference type="HAMAP" id="MF_00021">
    <property type="entry name" value="ThiI"/>
    <property type="match status" value="1"/>
</dbReference>
<dbReference type="InterPro" id="IPR014729">
    <property type="entry name" value="Rossmann-like_a/b/a_fold"/>
</dbReference>
<dbReference type="InterPro" id="IPR020536">
    <property type="entry name" value="ThiI_AANH"/>
</dbReference>
<dbReference type="InterPro" id="IPR054173">
    <property type="entry name" value="ThiI_fer"/>
</dbReference>
<dbReference type="InterPro" id="IPR049961">
    <property type="entry name" value="ThiI_N"/>
</dbReference>
<dbReference type="InterPro" id="IPR004114">
    <property type="entry name" value="THUMP_dom"/>
</dbReference>
<dbReference type="InterPro" id="IPR049962">
    <property type="entry name" value="THUMP_ThiI"/>
</dbReference>
<dbReference type="InterPro" id="IPR003720">
    <property type="entry name" value="tRNA_STrfase"/>
</dbReference>
<dbReference type="InterPro" id="IPR050102">
    <property type="entry name" value="tRNA_sulfurtransferase_ThiI"/>
</dbReference>
<dbReference type="NCBIfam" id="TIGR00342">
    <property type="entry name" value="tRNA uracil 4-sulfurtransferase ThiI"/>
    <property type="match status" value="1"/>
</dbReference>
<dbReference type="PANTHER" id="PTHR43209">
    <property type="entry name" value="TRNA SULFURTRANSFERASE"/>
    <property type="match status" value="1"/>
</dbReference>
<dbReference type="PANTHER" id="PTHR43209:SF1">
    <property type="entry name" value="TRNA SULFURTRANSFERASE"/>
    <property type="match status" value="1"/>
</dbReference>
<dbReference type="Pfam" id="PF02568">
    <property type="entry name" value="ThiI"/>
    <property type="match status" value="1"/>
</dbReference>
<dbReference type="Pfam" id="PF22025">
    <property type="entry name" value="ThiI_fer"/>
    <property type="match status" value="1"/>
</dbReference>
<dbReference type="Pfam" id="PF02926">
    <property type="entry name" value="THUMP"/>
    <property type="match status" value="1"/>
</dbReference>
<dbReference type="SMART" id="SM00981">
    <property type="entry name" value="THUMP"/>
    <property type="match status" value="1"/>
</dbReference>
<dbReference type="SUPFAM" id="SSF52402">
    <property type="entry name" value="Adenine nucleotide alpha hydrolases-like"/>
    <property type="match status" value="1"/>
</dbReference>
<dbReference type="SUPFAM" id="SSF143437">
    <property type="entry name" value="THUMP domain-like"/>
    <property type="match status" value="1"/>
</dbReference>
<dbReference type="PROSITE" id="PS51165">
    <property type="entry name" value="THUMP"/>
    <property type="match status" value="1"/>
</dbReference>
<proteinExistence type="inferred from homology"/>